<evidence type="ECO:0000255" key="1">
    <source>
        <dbReference type="HAMAP-Rule" id="MF_00558"/>
    </source>
</evidence>
<feature type="chain" id="PRO_1000082037" description="Succinate--CoA ligase [ADP-forming] subunit beta">
    <location>
        <begin position="1"/>
        <end position="388"/>
    </location>
</feature>
<feature type="domain" description="ATP-grasp" evidence="1">
    <location>
        <begin position="9"/>
        <end position="244"/>
    </location>
</feature>
<feature type="binding site" evidence="1">
    <location>
        <position position="46"/>
    </location>
    <ligand>
        <name>ATP</name>
        <dbReference type="ChEBI" id="CHEBI:30616"/>
    </ligand>
</feature>
<feature type="binding site" evidence="1">
    <location>
        <begin position="53"/>
        <end position="55"/>
    </location>
    <ligand>
        <name>ATP</name>
        <dbReference type="ChEBI" id="CHEBI:30616"/>
    </ligand>
</feature>
<feature type="binding site" evidence="1">
    <location>
        <position position="99"/>
    </location>
    <ligand>
        <name>ATP</name>
        <dbReference type="ChEBI" id="CHEBI:30616"/>
    </ligand>
</feature>
<feature type="binding site" evidence="1">
    <location>
        <position position="102"/>
    </location>
    <ligand>
        <name>ATP</name>
        <dbReference type="ChEBI" id="CHEBI:30616"/>
    </ligand>
</feature>
<feature type="binding site" evidence="1">
    <location>
        <position position="107"/>
    </location>
    <ligand>
        <name>ATP</name>
        <dbReference type="ChEBI" id="CHEBI:30616"/>
    </ligand>
</feature>
<feature type="binding site" evidence="1">
    <location>
        <position position="199"/>
    </location>
    <ligand>
        <name>Mg(2+)</name>
        <dbReference type="ChEBI" id="CHEBI:18420"/>
    </ligand>
</feature>
<feature type="binding site" evidence="1">
    <location>
        <position position="213"/>
    </location>
    <ligand>
        <name>Mg(2+)</name>
        <dbReference type="ChEBI" id="CHEBI:18420"/>
    </ligand>
</feature>
<feature type="binding site" evidence="1">
    <location>
        <position position="264"/>
    </location>
    <ligand>
        <name>substrate</name>
        <note>ligand shared with subunit alpha</note>
    </ligand>
</feature>
<feature type="binding site" evidence="1">
    <location>
        <begin position="321"/>
        <end position="323"/>
    </location>
    <ligand>
        <name>substrate</name>
        <note>ligand shared with subunit alpha</note>
    </ligand>
</feature>
<keyword id="KW-0067">ATP-binding</keyword>
<keyword id="KW-0436">Ligase</keyword>
<keyword id="KW-0460">Magnesium</keyword>
<keyword id="KW-0479">Metal-binding</keyword>
<keyword id="KW-0547">Nucleotide-binding</keyword>
<keyword id="KW-0816">Tricarboxylic acid cycle</keyword>
<reference key="1">
    <citation type="submission" date="2006-08" db="EMBL/GenBank/DDBJ databases">
        <title>Complete sequence of chromosome 1 of Burkholderia cepacia AMMD.</title>
        <authorList>
            <person name="Copeland A."/>
            <person name="Lucas S."/>
            <person name="Lapidus A."/>
            <person name="Barry K."/>
            <person name="Detter J.C."/>
            <person name="Glavina del Rio T."/>
            <person name="Hammon N."/>
            <person name="Israni S."/>
            <person name="Pitluck S."/>
            <person name="Bruce D."/>
            <person name="Chain P."/>
            <person name="Malfatti S."/>
            <person name="Shin M."/>
            <person name="Vergez L."/>
            <person name="Schmutz J."/>
            <person name="Larimer F."/>
            <person name="Land M."/>
            <person name="Hauser L."/>
            <person name="Kyrpides N."/>
            <person name="Kim E."/>
            <person name="Parke J."/>
            <person name="Coenye T."/>
            <person name="Konstantinidis K."/>
            <person name="Ramette A."/>
            <person name="Tiedje J."/>
            <person name="Richardson P."/>
        </authorList>
    </citation>
    <scope>NUCLEOTIDE SEQUENCE [LARGE SCALE GENOMIC DNA]</scope>
    <source>
        <strain>ATCC BAA-244 / DSM 16087 / CCUG 44356 / LMG 19182 / AMMD</strain>
    </source>
</reference>
<sequence length="388" mass="41266">MKIHEYQGKEILRKFGVAVPRGKPAFSVDEAVKVAEELGGPVWVVKAQIHAGGRGKGGGVKVAKSIEQVREYANQILGMQLVTHQTGPEGQKVNRLMIEEGADIKQELYVSLVVDRISQKIVLMGSSEGGMDIEEVAEKHPELIHKVIVEPSTGLLDAQADDLAAKIGVPAASIPQARAILQGLYKAFWETDASLAEINPLNVSGDGKVIALDAKFNFDSNALFRHPEIVAYRDLDEEDPAEIEASKFDLAYISLDGNIGCLVNGAGLAMATMDTIKLFGGEPANFLDVGGGATTEKVTEAFKLMLKNPDLKAILVNIFGGIMRCDVIAEGVIAGSKAVNLNVPLVVRMKGTNEDLGKKMLADSGLPIISADSMEEAAQKVVAAAAGK</sequence>
<gene>
    <name evidence="1" type="primary">sucC</name>
    <name type="ordered locus">Bamb_2696</name>
</gene>
<protein>
    <recommendedName>
        <fullName evidence="1">Succinate--CoA ligase [ADP-forming] subunit beta</fullName>
        <ecNumber evidence="1">6.2.1.5</ecNumber>
    </recommendedName>
    <alternativeName>
        <fullName evidence="1">Succinyl-CoA synthetase subunit beta</fullName>
        <shortName evidence="1">SCS-beta</shortName>
    </alternativeName>
</protein>
<organism>
    <name type="scientific">Burkholderia ambifaria (strain ATCC BAA-244 / DSM 16087 / CCUG 44356 / LMG 19182 / AMMD)</name>
    <name type="common">Burkholderia cepacia (strain AMMD)</name>
    <dbReference type="NCBI Taxonomy" id="339670"/>
    <lineage>
        <taxon>Bacteria</taxon>
        <taxon>Pseudomonadati</taxon>
        <taxon>Pseudomonadota</taxon>
        <taxon>Betaproteobacteria</taxon>
        <taxon>Burkholderiales</taxon>
        <taxon>Burkholderiaceae</taxon>
        <taxon>Burkholderia</taxon>
        <taxon>Burkholderia cepacia complex</taxon>
    </lineage>
</organism>
<dbReference type="EC" id="6.2.1.5" evidence="1"/>
<dbReference type="EMBL" id="CP000440">
    <property type="protein sequence ID" value="ABI88252.1"/>
    <property type="molecule type" value="Genomic_DNA"/>
</dbReference>
<dbReference type="RefSeq" id="WP_006755512.1">
    <property type="nucleotide sequence ID" value="NZ_CP009798.1"/>
</dbReference>
<dbReference type="SMR" id="Q0BC71"/>
<dbReference type="GeneID" id="93194304"/>
<dbReference type="KEGG" id="bam:Bamb_2696"/>
<dbReference type="PATRIC" id="fig|339670.21.peg.2199"/>
<dbReference type="eggNOG" id="COG0045">
    <property type="taxonomic scope" value="Bacteria"/>
</dbReference>
<dbReference type="UniPathway" id="UPA00223">
    <property type="reaction ID" value="UER00999"/>
</dbReference>
<dbReference type="Proteomes" id="UP000000662">
    <property type="component" value="Chromosome 1"/>
</dbReference>
<dbReference type="GO" id="GO:0005829">
    <property type="term" value="C:cytosol"/>
    <property type="evidence" value="ECO:0007669"/>
    <property type="project" value="TreeGrafter"/>
</dbReference>
<dbReference type="GO" id="GO:0042709">
    <property type="term" value="C:succinate-CoA ligase complex"/>
    <property type="evidence" value="ECO:0007669"/>
    <property type="project" value="TreeGrafter"/>
</dbReference>
<dbReference type="GO" id="GO:0005524">
    <property type="term" value="F:ATP binding"/>
    <property type="evidence" value="ECO:0007669"/>
    <property type="project" value="UniProtKB-UniRule"/>
</dbReference>
<dbReference type="GO" id="GO:0000287">
    <property type="term" value="F:magnesium ion binding"/>
    <property type="evidence" value="ECO:0007669"/>
    <property type="project" value="UniProtKB-UniRule"/>
</dbReference>
<dbReference type="GO" id="GO:0004775">
    <property type="term" value="F:succinate-CoA ligase (ADP-forming) activity"/>
    <property type="evidence" value="ECO:0007669"/>
    <property type="project" value="UniProtKB-UniRule"/>
</dbReference>
<dbReference type="GO" id="GO:0004776">
    <property type="term" value="F:succinate-CoA ligase (GDP-forming) activity"/>
    <property type="evidence" value="ECO:0007669"/>
    <property type="project" value="RHEA"/>
</dbReference>
<dbReference type="GO" id="GO:0006104">
    <property type="term" value="P:succinyl-CoA metabolic process"/>
    <property type="evidence" value="ECO:0007669"/>
    <property type="project" value="TreeGrafter"/>
</dbReference>
<dbReference type="GO" id="GO:0006099">
    <property type="term" value="P:tricarboxylic acid cycle"/>
    <property type="evidence" value="ECO:0007669"/>
    <property type="project" value="UniProtKB-UniRule"/>
</dbReference>
<dbReference type="FunFam" id="3.30.1490.20:FF:000002">
    <property type="entry name" value="Succinate--CoA ligase [ADP-forming] subunit beta"/>
    <property type="match status" value="1"/>
</dbReference>
<dbReference type="FunFam" id="3.30.470.20:FF:000002">
    <property type="entry name" value="Succinate--CoA ligase [ADP-forming] subunit beta"/>
    <property type="match status" value="1"/>
</dbReference>
<dbReference type="FunFam" id="3.40.50.261:FF:000001">
    <property type="entry name" value="Succinate--CoA ligase [ADP-forming] subunit beta"/>
    <property type="match status" value="1"/>
</dbReference>
<dbReference type="Gene3D" id="3.30.1490.20">
    <property type="entry name" value="ATP-grasp fold, A domain"/>
    <property type="match status" value="1"/>
</dbReference>
<dbReference type="Gene3D" id="3.30.470.20">
    <property type="entry name" value="ATP-grasp fold, B domain"/>
    <property type="match status" value="1"/>
</dbReference>
<dbReference type="Gene3D" id="3.40.50.261">
    <property type="entry name" value="Succinyl-CoA synthetase domains"/>
    <property type="match status" value="1"/>
</dbReference>
<dbReference type="HAMAP" id="MF_00558">
    <property type="entry name" value="Succ_CoA_beta"/>
    <property type="match status" value="1"/>
</dbReference>
<dbReference type="InterPro" id="IPR011761">
    <property type="entry name" value="ATP-grasp"/>
</dbReference>
<dbReference type="InterPro" id="IPR013650">
    <property type="entry name" value="ATP-grasp_succ-CoA_synth-type"/>
</dbReference>
<dbReference type="InterPro" id="IPR013815">
    <property type="entry name" value="ATP_grasp_subdomain_1"/>
</dbReference>
<dbReference type="InterPro" id="IPR017866">
    <property type="entry name" value="Succ-CoA_synthase_bsu_CS"/>
</dbReference>
<dbReference type="InterPro" id="IPR005811">
    <property type="entry name" value="SUCC_ACL_C"/>
</dbReference>
<dbReference type="InterPro" id="IPR005809">
    <property type="entry name" value="Succ_CoA_ligase-like_bsu"/>
</dbReference>
<dbReference type="InterPro" id="IPR016102">
    <property type="entry name" value="Succinyl-CoA_synth-like"/>
</dbReference>
<dbReference type="NCBIfam" id="NF001913">
    <property type="entry name" value="PRK00696.1"/>
    <property type="match status" value="1"/>
</dbReference>
<dbReference type="NCBIfam" id="TIGR01016">
    <property type="entry name" value="sucCoAbeta"/>
    <property type="match status" value="1"/>
</dbReference>
<dbReference type="PANTHER" id="PTHR11815:SF10">
    <property type="entry name" value="SUCCINATE--COA LIGASE [GDP-FORMING] SUBUNIT BETA, MITOCHONDRIAL"/>
    <property type="match status" value="1"/>
</dbReference>
<dbReference type="PANTHER" id="PTHR11815">
    <property type="entry name" value="SUCCINYL-COA SYNTHETASE BETA CHAIN"/>
    <property type="match status" value="1"/>
</dbReference>
<dbReference type="Pfam" id="PF08442">
    <property type="entry name" value="ATP-grasp_2"/>
    <property type="match status" value="1"/>
</dbReference>
<dbReference type="Pfam" id="PF00549">
    <property type="entry name" value="Ligase_CoA"/>
    <property type="match status" value="1"/>
</dbReference>
<dbReference type="PIRSF" id="PIRSF001554">
    <property type="entry name" value="SucCS_beta"/>
    <property type="match status" value="1"/>
</dbReference>
<dbReference type="SUPFAM" id="SSF56059">
    <property type="entry name" value="Glutathione synthetase ATP-binding domain-like"/>
    <property type="match status" value="1"/>
</dbReference>
<dbReference type="SUPFAM" id="SSF52210">
    <property type="entry name" value="Succinyl-CoA synthetase domains"/>
    <property type="match status" value="1"/>
</dbReference>
<dbReference type="PROSITE" id="PS50975">
    <property type="entry name" value="ATP_GRASP"/>
    <property type="match status" value="1"/>
</dbReference>
<dbReference type="PROSITE" id="PS01217">
    <property type="entry name" value="SUCCINYL_COA_LIG_3"/>
    <property type="match status" value="1"/>
</dbReference>
<comment type="function">
    <text evidence="1">Succinyl-CoA synthetase functions in the citric acid cycle (TCA), coupling the hydrolysis of succinyl-CoA to the synthesis of either ATP or GTP and thus represents the only step of substrate-level phosphorylation in the TCA. The beta subunit provides nucleotide specificity of the enzyme and binds the substrate succinate, while the binding sites for coenzyme A and phosphate are found in the alpha subunit.</text>
</comment>
<comment type="catalytic activity">
    <reaction evidence="1">
        <text>succinate + ATP + CoA = succinyl-CoA + ADP + phosphate</text>
        <dbReference type="Rhea" id="RHEA:17661"/>
        <dbReference type="ChEBI" id="CHEBI:30031"/>
        <dbReference type="ChEBI" id="CHEBI:30616"/>
        <dbReference type="ChEBI" id="CHEBI:43474"/>
        <dbReference type="ChEBI" id="CHEBI:57287"/>
        <dbReference type="ChEBI" id="CHEBI:57292"/>
        <dbReference type="ChEBI" id="CHEBI:456216"/>
        <dbReference type="EC" id="6.2.1.5"/>
    </reaction>
    <physiologicalReaction direction="right-to-left" evidence="1">
        <dbReference type="Rhea" id="RHEA:17663"/>
    </physiologicalReaction>
</comment>
<comment type="catalytic activity">
    <reaction evidence="1">
        <text>GTP + succinate + CoA = succinyl-CoA + GDP + phosphate</text>
        <dbReference type="Rhea" id="RHEA:22120"/>
        <dbReference type="ChEBI" id="CHEBI:30031"/>
        <dbReference type="ChEBI" id="CHEBI:37565"/>
        <dbReference type="ChEBI" id="CHEBI:43474"/>
        <dbReference type="ChEBI" id="CHEBI:57287"/>
        <dbReference type="ChEBI" id="CHEBI:57292"/>
        <dbReference type="ChEBI" id="CHEBI:58189"/>
    </reaction>
    <physiologicalReaction direction="right-to-left" evidence="1">
        <dbReference type="Rhea" id="RHEA:22122"/>
    </physiologicalReaction>
</comment>
<comment type="cofactor">
    <cofactor evidence="1">
        <name>Mg(2+)</name>
        <dbReference type="ChEBI" id="CHEBI:18420"/>
    </cofactor>
    <text evidence="1">Binds 1 Mg(2+) ion per subunit.</text>
</comment>
<comment type="pathway">
    <text evidence="1">Carbohydrate metabolism; tricarboxylic acid cycle; succinate from succinyl-CoA (ligase route): step 1/1.</text>
</comment>
<comment type="subunit">
    <text evidence="1">Heterotetramer of two alpha and two beta subunits.</text>
</comment>
<comment type="similarity">
    <text evidence="1">Belongs to the succinate/malate CoA ligase beta subunit family.</text>
</comment>
<name>SUCC_BURCM</name>
<proteinExistence type="inferred from homology"/>
<accession>Q0BC71</accession>